<name>COBS_NITV2</name>
<organism>
    <name type="scientific">Nitratidesulfovibrio vulgaris (strain ATCC 29579 / DSM 644 / CCUG 34227 / NCIMB 8303 / VKM B-1760 / Hildenborough)</name>
    <name type="common">Desulfovibrio vulgaris</name>
    <dbReference type="NCBI Taxonomy" id="882"/>
    <lineage>
        <taxon>Bacteria</taxon>
        <taxon>Pseudomonadati</taxon>
        <taxon>Thermodesulfobacteriota</taxon>
        <taxon>Desulfovibrionia</taxon>
        <taxon>Desulfovibrionales</taxon>
        <taxon>Desulfovibrionaceae</taxon>
        <taxon>Nitratidesulfovibrio</taxon>
    </lineage>
</organism>
<protein>
    <recommendedName>
        <fullName evidence="1">Adenosylcobinamide-GDP ribazoletransferase</fullName>
        <ecNumber evidence="1">2.7.8.26</ecNumber>
    </recommendedName>
    <alternativeName>
        <fullName evidence="1">Cobalamin synthase</fullName>
    </alternativeName>
    <alternativeName>
        <fullName evidence="1">Cobalamin-5'-phosphate synthase</fullName>
    </alternativeName>
</protein>
<proteinExistence type="inferred from homology"/>
<gene>
    <name evidence="1" type="primary">cobS</name>
    <name type="ordered locus">DVU_0914</name>
</gene>
<sequence length="245" mass="25174">MPTFLHHALLACGFLTRLVPARVATADDMAAAVRWFPLAGLVVGGACWLPFALGLAASHPAIQAWLYVLINLWVTRGLHWDGVADLADAWGSSATGERFWDILKDSRIGAFGVMGLLLGFGGQYIGAHEIFISGRLGVLIAAPIVGRGACVILAALVPPGSRSTLGRLTCAGADRIAIGVAATCGMLALLLTTPAITTVTTIAICGAIVTALAHLARREDGINGDFMGACIAGCEGTVLLAASMG</sequence>
<keyword id="KW-0997">Cell inner membrane</keyword>
<keyword id="KW-1003">Cell membrane</keyword>
<keyword id="KW-0169">Cobalamin biosynthesis</keyword>
<keyword id="KW-0460">Magnesium</keyword>
<keyword id="KW-0472">Membrane</keyword>
<keyword id="KW-1185">Reference proteome</keyword>
<keyword id="KW-0808">Transferase</keyword>
<keyword id="KW-0812">Transmembrane</keyword>
<keyword id="KW-1133">Transmembrane helix</keyword>
<evidence type="ECO:0000255" key="1">
    <source>
        <dbReference type="HAMAP-Rule" id="MF_00719"/>
    </source>
</evidence>
<reference key="1">
    <citation type="journal article" date="2004" name="Nat. Biotechnol.">
        <title>The genome sequence of the anaerobic, sulfate-reducing bacterium Desulfovibrio vulgaris Hildenborough.</title>
        <authorList>
            <person name="Heidelberg J.F."/>
            <person name="Seshadri R."/>
            <person name="Haveman S.A."/>
            <person name="Hemme C.L."/>
            <person name="Paulsen I.T."/>
            <person name="Kolonay J.F."/>
            <person name="Eisen J.A."/>
            <person name="Ward N.L."/>
            <person name="Methe B.A."/>
            <person name="Brinkac L.M."/>
            <person name="Daugherty S.C."/>
            <person name="DeBoy R.T."/>
            <person name="Dodson R.J."/>
            <person name="Durkin A.S."/>
            <person name="Madupu R."/>
            <person name="Nelson W.C."/>
            <person name="Sullivan S.A."/>
            <person name="Fouts D.E."/>
            <person name="Haft D.H."/>
            <person name="Selengut J."/>
            <person name="Peterson J.D."/>
            <person name="Davidsen T.M."/>
            <person name="Zafar N."/>
            <person name="Zhou L."/>
            <person name="Radune D."/>
            <person name="Dimitrov G."/>
            <person name="Hance M."/>
            <person name="Tran K."/>
            <person name="Khouri H.M."/>
            <person name="Gill J."/>
            <person name="Utterback T.R."/>
            <person name="Feldblyum T.V."/>
            <person name="Wall J.D."/>
            <person name="Voordouw G."/>
            <person name="Fraser C.M."/>
        </authorList>
    </citation>
    <scope>NUCLEOTIDE SEQUENCE [LARGE SCALE GENOMIC DNA]</scope>
    <source>
        <strain>ATCC 29579 / DSM 644 / CCUG 34227 / NCIMB 8303 / VKM B-1760 / Hildenborough</strain>
    </source>
</reference>
<comment type="function">
    <text evidence="1">Joins adenosylcobinamide-GDP and alpha-ribazole to generate adenosylcobalamin (Ado-cobalamin). Also synthesizes adenosylcobalamin 5'-phosphate from adenosylcobinamide-GDP and alpha-ribazole 5'-phosphate.</text>
</comment>
<comment type="catalytic activity">
    <reaction evidence="1">
        <text>alpha-ribazole + adenosylcob(III)inamide-GDP = adenosylcob(III)alamin + GMP + H(+)</text>
        <dbReference type="Rhea" id="RHEA:16049"/>
        <dbReference type="ChEBI" id="CHEBI:10329"/>
        <dbReference type="ChEBI" id="CHEBI:15378"/>
        <dbReference type="ChEBI" id="CHEBI:18408"/>
        <dbReference type="ChEBI" id="CHEBI:58115"/>
        <dbReference type="ChEBI" id="CHEBI:60487"/>
        <dbReference type="EC" id="2.7.8.26"/>
    </reaction>
</comment>
<comment type="catalytic activity">
    <reaction evidence="1">
        <text>alpha-ribazole 5'-phosphate + adenosylcob(III)inamide-GDP = adenosylcob(III)alamin 5'-phosphate + GMP + H(+)</text>
        <dbReference type="Rhea" id="RHEA:23560"/>
        <dbReference type="ChEBI" id="CHEBI:15378"/>
        <dbReference type="ChEBI" id="CHEBI:57918"/>
        <dbReference type="ChEBI" id="CHEBI:58115"/>
        <dbReference type="ChEBI" id="CHEBI:60487"/>
        <dbReference type="ChEBI" id="CHEBI:60493"/>
        <dbReference type="EC" id="2.7.8.26"/>
    </reaction>
</comment>
<comment type="cofactor">
    <cofactor evidence="1">
        <name>Mg(2+)</name>
        <dbReference type="ChEBI" id="CHEBI:18420"/>
    </cofactor>
</comment>
<comment type="pathway">
    <text evidence="1">Cofactor biosynthesis; adenosylcobalamin biosynthesis; adenosylcobalamin from cob(II)yrinate a,c-diamide: step 7/7.</text>
</comment>
<comment type="subcellular location">
    <subcellularLocation>
        <location evidence="1">Cell inner membrane</location>
        <topology evidence="1">Multi-pass membrane protein</topology>
    </subcellularLocation>
</comment>
<comment type="similarity">
    <text evidence="1">Belongs to the CobS family.</text>
</comment>
<dbReference type="EC" id="2.7.8.26" evidence="1"/>
<dbReference type="EMBL" id="AE017285">
    <property type="protein sequence ID" value="AAS95394.1"/>
    <property type="molecule type" value="Genomic_DNA"/>
</dbReference>
<dbReference type="RefSeq" id="WP_010938213.1">
    <property type="nucleotide sequence ID" value="NC_002937.3"/>
</dbReference>
<dbReference type="RefSeq" id="YP_010135.1">
    <property type="nucleotide sequence ID" value="NC_002937.3"/>
</dbReference>
<dbReference type="STRING" id="882.DVU_0914"/>
<dbReference type="PaxDb" id="882-DVU_0914"/>
<dbReference type="EnsemblBacteria" id="AAS95394">
    <property type="protein sequence ID" value="AAS95394"/>
    <property type="gene ID" value="DVU_0914"/>
</dbReference>
<dbReference type="KEGG" id="dvu:DVU_0914"/>
<dbReference type="PATRIC" id="fig|882.5.peg.858"/>
<dbReference type="eggNOG" id="COG0368">
    <property type="taxonomic scope" value="Bacteria"/>
</dbReference>
<dbReference type="HOGENOM" id="CLU_057426_1_2_7"/>
<dbReference type="OrthoDB" id="9794223at2"/>
<dbReference type="PhylomeDB" id="Q72DL5"/>
<dbReference type="UniPathway" id="UPA00148">
    <property type="reaction ID" value="UER00238"/>
</dbReference>
<dbReference type="Proteomes" id="UP000002194">
    <property type="component" value="Chromosome"/>
</dbReference>
<dbReference type="GO" id="GO:0005886">
    <property type="term" value="C:plasma membrane"/>
    <property type="evidence" value="ECO:0007669"/>
    <property type="project" value="UniProtKB-SubCell"/>
</dbReference>
<dbReference type="GO" id="GO:0051073">
    <property type="term" value="F:adenosylcobinamide-GDP ribazoletransferase activity"/>
    <property type="evidence" value="ECO:0007669"/>
    <property type="project" value="UniProtKB-UniRule"/>
</dbReference>
<dbReference type="GO" id="GO:0008818">
    <property type="term" value="F:cobalamin 5'-phosphate synthase activity"/>
    <property type="evidence" value="ECO:0007669"/>
    <property type="project" value="UniProtKB-UniRule"/>
</dbReference>
<dbReference type="GO" id="GO:0009236">
    <property type="term" value="P:cobalamin biosynthetic process"/>
    <property type="evidence" value="ECO:0007669"/>
    <property type="project" value="UniProtKB-UniRule"/>
</dbReference>
<dbReference type="HAMAP" id="MF_00719">
    <property type="entry name" value="CobS"/>
    <property type="match status" value="1"/>
</dbReference>
<dbReference type="InterPro" id="IPR003805">
    <property type="entry name" value="CobS"/>
</dbReference>
<dbReference type="PANTHER" id="PTHR34148">
    <property type="entry name" value="ADENOSYLCOBINAMIDE-GDP RIBAZOLETRANSFERASE"/>
    <property type="match status" value="1"/>
</dbReference>
<dbReference type="PANTHER" id="PTHR34148:SF1">
    <property type="entry name" value="ADENOSYLCOBINAMIDE-GDP RIBAZOLETRANSFERASE"/>
    <property type="match status" value="1"/>
</dbReference>
<dbReference type="Pfam" id="PF02654">
    <property type="entry name" value="CobS"/>
    <property type="match status" value="1"/>
</dbReference>
<feature type="chain" id="PRO_1000132572" description="Adenosylcobinamide-GDP ribazoletransferase">
    <location>
        <begin position="1"/>
        <end position="245"/>
    </location>
</feature>
<feature type="transmembrane region" description="Helical" evidence="1">
    <location>
        <begin position="35"/>
        <end position="55"/>
    </location>
</feature>
<feature type="transmembrane region" description="Helical" evidence="1">
    <location>
        <begin position="108"/>
        <end position="128"/>
    </location>
</feature>
<feature type="transmembrane region" description="Helical" evidence="1">
    <location>
        <begin position="137"/>
        <end position="157"/>
    </location>
</feature>
<feature type="transmembrane region" description="Helical" evidence="1">
    <location>
        <begin position="176"/>
        <end position="196"/>
    </location>
</feature>
<feature type="transmembrane region" description="Helical" evidence="1">
    <location>
        <begin position="197"/>
        <end position="217"/>
    </location>
</feature>
<accession>Q72DL5</accession>